<protein>
    <recommendedName>
        <fullName evidence="1">Adenylate kinase</fullName>
        <shortName evidence="1">AK</shortName>
        <ecNumber evidence="1">2.7.4.3</ecNumber>
    </recommendedName>
    <alternativeName>
        <fullName evidence="1">ATP-AMP transphosphorylase</fullName>
    </alternativeName>
    <alternativeName>
        <fullName evidence="1">ATP:AMP phosphotransferase</fullName>
    </alternativeName>
    <alternativeName>
        <fullName evidence="1">Adenylate monophosphate kinase</fullName>
    </alternativeName>
</protein>
<name>KAD_RHIEC</name>
<gene>
    <name evidence="1" type="primary">adk</name>
    <name type="ordered locus">RHE_CH01696</name>
</gene>
<feature type="chain" id="PRO_1000021764" description="Adenylate kinase">
    <location>
        <begin position="1"/>
        <end position="216"/>
    </location>
</feature>
<feature type="region of interest" description="NMP" evidence="1">
    <location>
        <begin position="30"/>
        <end position="59"/>
    </location>
</feature>
<feature type="region of interest" description="LID" evidence="1">
    <location>
        <begin position="126"/>
        <end position="163"/>
    </location>
</feature>
<feature type="binding site" evidence="1">
    <location>
        <begin position="10"/>
        <end position="15"/>
    </location>
    <ligand>
        <name>ATP</name>
        <dbReference type="ChEBI" id="CHEBI:30616"/>
    </ligand>
</feature>
<feature type="binding site" evidence="1">
    <location>
        <position position="31"/>
    </location>
    <ligand>
        <name>AMP</name>
        <dbReference type="ChEBI" id="CHEBI:456215"/>
    </ligand>
</feature>
<feature type="binding site" evidence="1">
    <location>
        <position position="36"/>
    </location>
    <ligand>
        <name>AMP</name>
        <dbReference type="ChEBI" id="CHEBI:456215"/>
    </ligand>
</feature>
<feature type="binding site" evidence="1">
    <location>
        <begin position="57"/>
        <end position="59"/>
    </location>
    <ligand>
        <name>AMP</name>
        <dbReference type="ChEBI" id="CHEBI:456215"/>
    </ligand>
</feature>
<feature type="binding site" evidence="1">
    <location>
        <begin position="85"/>
        <end position="88"/>
    </location>
    <ligand>
        <name>AMP</name>
        <dbReference type="ChEBI" id="CHEBI:456215"/>
    </ligand>
</feature>
<feature type="binding site" evidence="1">
    <location>
        <position position="92"/>
    </location>
    <ligand>
        <name>AMP</name>
        <dbReference type="ChEBI" id="CHEBI:456215"/>
    </ligand>
</feature>
<feature type="binding site" evidence="1">
    <location>
        <position position="127"/>
    </location>
    <ligand>
        <name>ATP</name>
        <dbReference type="ChEBI" id="CHEBI:30616"/>
    </ligand>
</feature>
<feature type="binding site" evidence="1">
    <location>
        <position position="130"/>
    </location>
    <ligand>
        <name>Zn(2+)</name>
        <dbReference type="ChEBI" id="CHEBI:29105"/>
        <note>structural</note>
    </ligand>
</feature>
<feature type="binding site" evidence="1">
    <location>
        <position position="133"/>
    </location>
    <ligand>
        <name>Zn(2+)</name>
        <dbReference type="ChEBI" id="CHEBI:29105"/>
        <note>structural</note>
    </ligand>
</feature>
<feature type="binding site" evidence="1">
    <location>
        <begin position="136"/>
        <end position="137"/>
    </location>
    <ligand>
        <name>ATP</name>
        <dbReference type="ChEBI" id="CHEBI:30616"/>
    </ligand>
</feature>
<feature type="binding site" evidence="1">
    <location>
        <position position="150"/>
    </location>
    <ligand>
        <name>Zn(2+)</name>
        <dbReference type="ChEBI" id="CHEBI:29105"/>
        <note>structural</note>
    </ligand>
</feature>
<feature type="binding site" evidence="1">
    <location>
        <position position="153"/>
    </location>
    <ligand>
        <name>Zn(2+)</name>
        <dbReference type="ChEBI" id="CHEBI:29105"/>
        <note>structural</note>
    </ligand>
</feature>
<feature type="binding site" evidence="1">
    <location>
        <position position="160"/>
    </location>
    <ligand>
        <name>AMP</name>
        <dbReference type="ChEBI" id="CHEBI:456215"/>
    </ligand>
</feature>
<feature type="binding site" evidence="1">
    <location>
        <position position="172"/>
    </location>
    <ligand>
        <name>AMP</name>
        <dbReference type="ChEBI" id="CHEBI:456215"/>
    </ligand>
</feature>
<feature type="binding site" evidence="1">
    <location>
        <position position="200"/>
    </location>
    <ligand>
        <name>ATP</name>
        <dbReference type="ChEBI" id="CHEBI:30616"/>
    </ligand>
</feature>
<accession>Q2K9J5</accession>
<comment type="function">
    <text evidence="1">Catalyzes the reversible transfer of the terminal phosphate group between ATP and AMP. Plays an important role in cellular energy homeostasis and in adenine nucleotide metabolism.</text>
</comment>
<comment type="catalytic activity">
    <reaction evidence="1">
        <text>AMP + ATP = 2 ADP</text>
        <dbReference type="Rhea" id="RHEA:12973"/>
        <dbReference type="ChEBI" id="CHEBI:30616"/>
        <dbReference type="ChEBI" id="CHEBI:456215"/>
        <dbReference type="ChEBI" id="CHEBI:456216"/>
        <dbReference type="EC" id="2.7.4.3"/>
    </reaction>
</comment>
<comment type="pathway">
    <text evidence="1">Purine metabolism; AMP biosynthesis via salvage pathway; AMP from ADP: step 1/1.</text>
</comment>
<comment type="subunit">
    <text evidence="1">Monomer.</text>
</comment>
<comment type="subcellular location">
    <subcellularLocation>
        <location evidence="1">Cytoplasm</location>
    </subcellularLocation>
</comment>
<comment type="domain">
    <text evidence="1">Consists of three domains, a large central CORE domain and two small peripheral domains, NMPbind and LID, which undergo movements during catalysis. The LID domain closes over the site of phosphoryl transfer upon ATP binding. Assembling and dissambling the active center during each catalytic cycle provides an effective means to prevent ATP hydrolysis. Some bacteria have evolved a zinc-coordinating structure that stabilizes the LID domain.</text>
</comment>
<comment type="similarity">
    <text evidence="1">Belongs to the adenylate kinase family.</text>
</comment>
<organism>
    <name type="scientific">Rhizobium etli (strain ATCC 51251 / DSM 11541 / JCM 21823 / NBRC 15573 / CFN 42)</name>
    <dbReference type="NCBI Taxonomy" id="347834"/>
    <lineage>
        <taxon>Bacteria</taxon>
        <taxon>Pseudomonadati</taxon>
        <taxon>Pseudomonadota</taxon>
        <taxon>Alphaproteobacteria</taxon>
        <taxon>Hyphomicrobiales</taxon>
        <taxon>Rhizobiaceae</taxon>
        <taxon>Rhizobium/Agrobacterium group</taxon>
        <taxon>Rhizobium</taxon>
    </lineage>
</organism>
<keyword id="KW-0067">ATP-binding</keyword>
<keyword id="KW-0963">Cytoplasm</keyword>
<keyword id="KW-0418">Kinase</keyword>
<keyword id="KW-0479">Metal-binding</keyword>
<keyword id="KW-0545">Nucleotide biosynthesis</keyword>
<keyword id="KW-0547">Nucleotide-binding</keyword>
<keyword id="KW-1185">Reference proteome</keyword>
<keyword id="KW-0808">Transferase</keyword>
<keyword id="KW-0862">Zinc</keyword>
<sequence length="216" mass="23602">MRLILLGPPGAGKGTQAQRIVEKHGIPQLSTGDMLRAAVNAGTEVGKRAKAVMDAGKLVSDEIVIAIVSERIDQPDCANGFILDGFPRTLVQADATEAMLKAKGLDLSVVIEFRVDDEELVRRVDGRYTCAQCGTVYHDTDKVPVEEGVCDKCGSTHFKRRPDDNAETMIKRLEVYYKETSPLIGYYHAKGKLRPVDGMAEIDQVTAEVEAILSKL</sequence>
<evidence type="ECO:0000255" key="1">
    <source>
        <dbReference type="HAMAP-Rule" id="MF_00235"/>
    </source>
</evidence>
<proteinExistence type="inferred from homology"/>
<dbReference type="EC" id="2.7.4.3" evidence="1"/>
<dbReference type="EMBL" id="CP000133">
    <property type="protein sequence ID" value="ABC90491.1"/>
    <property type="molecule type" value="Genomic_DNA"/>
</dbReference>
<dbReference type="RefSeq" id="WP_011424991.1">
    <property type="nucleotide sequence ID" value="NC_007761.1"/>
</dbReference>
<dbReference type="SMR" id="Q2K9J5"/>
<dbReference type="KEGG" id="ret:RHE_CH01696"/>
<dbReference type="eggNOG" id="COG0563">
    <property type="taxonomic scope" value="Bacteria"/>
</dbReference>
<dbReference type="HOGENOM" id="CLU_032354_1_2_5"/>
<dbReference type="OrthoDB" id="9805030at2"/>
<dbReference type="UniPathway" id="UPA00588">
    <property type="reaction ID" value="UER00649"/>
</dbReference>
<dbReference type="Proteomes" id="UP000001936">
    <property type="component" value="Chromosome"/>
</dbReference>
<dbReference type="GO" id="GO:0005737">
    <property type="term" value="C:cytoplasm"/>
    <property type="evidence" value="ECO:0007669"/>
    <property type="project" value="UniProtKB-SubCell"/>
</dbReference>
<dbReference type="GO" id="GO:0004017">
    <property type="term" value="F:adenylate kinase activity"/>
    <property type="evidence" value="ECO:0007669"/>
    <property type="project" value="UniProtKB-UniRule"/>
</dbReference>
<dbReference type="GO" id="GO:0005524">
    <property type="term" value="F:ATP binding"/>
    <property type="evidence" value="ECO:0007669"/>
    <property type="project" value="UniProtKB-UniRule"/>
</dbReference>
<dbReference type="GO" id="GO:0008270">
    <property type="term" value="F:zinc ion binding"/>
    <property type="evidence" value="ECO:0007669"/>
    <property type="project" value="UniProtKB-UniRule"/>
</dbReference>
<dbReference type="GO" id="GO:0044209">
    <property type="term" value="P:AMP salvage"/>
    <property type="evidence" value="ECO:0007669"/>
    <property type="project" value="UniProtKB-UniRule"/>
</dbReference>
<dbReference type="CDD" id="cd01428">
    <property type="entry name" value="ADK"/>
    <property type="match status" value="1"/>
</dbReference>
<dbReference type="FunFam" id="3.40.50.300:FF:000106">
    <property type="entry name" value="Adenylate kinase mitochondrial"/>
    <property type="match status" value="1"/>
</dbReference>
<dbReference type="Gene3D" id="3.40.50.300">
    <property type="entry name" value="P-loop containing nucleotide triphosphate hydrolases"/>
    <property type="match status" value="1"/>
</dbReference>
<dbReference type="HAMAP" id="MF_00235">
    <property type="entry name" value="Adenylate_kinase_Adk"/>
    <property type="match status" value="1"/>
</dbReference>
<dbReference type="InterPro" id="IPR006259">
    <property type="entry name" value="Adenyl_kin_sub"/>
</dbReference>
<dbReference type="InterPro" id="IPR000850">
    <property type="entry name" value="Adenylat/UMP-CMP_kin"/>
</dbReference>
<dbReference type="InterPro" id="IPR033690">
    <property type="entry name" value="Adenylat_kinase_CS"/>
</dbReference>
<dbReference type="InterPro" id="IPR007862">
    <property type="entry name" value="Adenylate_kinase_lid-dom"/>
</dbReference>
<dbReference type="InterPro" id="IPR027417">
    <property type="entry name" value="P-loop_NTPase"/>
</dbReference>
<dbReference type="NCBIfam" id="TIGR01351">
    <property type="entry name" value="adk"/>
    <property type="match status" value="1"/>
</dbReference>
<dbReference type="NCBIfam" id="NF001380">
    <property type="entry name" value="PRK00279.1-2"/>
    <property type="match status" value="1"/>
</dbReference>
<dbReference type="NCBIfam" id="NF001381">
    <property type="entry name" value="PRK00279.1-3"/>
    <property type="match status" value="1"/>
</dbReference>
<dbReference type="NCBIfam" id="NF011100">
    <property type="entry name" value="PRK14527.1"/>
    <property type="match status" value="1"/>
</dbReference>
<dbReference type="NCBIfam" id="NF011105">
    <property type="entry name" value="PRK14532.1"/>
    <property type="match status" value="1"/>
</dbReference>
<dbReference type="PANTHER" id="PTHR23359">
    <property type="entry name" value="NUCLEOTIDE KINASE"/>
    <property type="match status" value="1"/>
</dbReference>
<dbReference type="Pfam" id="PF00406">
    <property type="entry name" value="ADK"/>
    <property type="match status" value="1"/>
</dbReference>
<dbReference type="Pfam" id="PF05191">
    <property type="entry name" value="ADK_lid"/>
    <property type="match status" value="1"/>
</dbReference>
<dbReference type="PRINTS" id="PR00094">
    <property type="entry name" value="ADENYLTKNASE"/>
</dbReference>
<dbReference type="SUPFAM" id="SSF52540">
    <property type="entry name" value="P-loop containing nucleoside triphosphate hydrolases"/>
    <property type="match status" value="1"/>
</dbReference>
<dbReference type="PROSITE" id="PS00113">
    <property type="entry name" value="ADENYLATE_KINASE"/>
    <property type="match status" value="1"/>
</dbReference>
<reference key="1">
    <citation type="journal article" date="2006" name="Proc. Natl. Acad. Sci. U.S.A.">
        <title>The partitioned Rhizobium etli genome: genetic and metabolic redundancy in seven interacting replicons.</title>
        <authorList>
            <person name="Gonzalez V."/>
            <person name="Santamaria R.I."/>
            <person name="Bustos P."/>
            <person name="Hernandez-Gonzalez I."/>
            <person name="Medrano-Soto A."/>
            <person name="Moreno-Hagelsieb G."/>
            <person name="Janga S.C."/>
            <person name="Ramirez M.A."/>
            <person name="Jimenez-Jacinto V."/>
            <person name="Collado-Vides J."/>
            <person name="Davila G."/>
        </authorList>
    </citation>
    <scope>NUCLEOTIDE SEQUENCE [LARGE SCALE GENOMIC DNA]</scope>
    <source>
        <strain>ATCC 51251 / DSM 11541 / JCM 21823 / NBRC 15573 / CFN 42</strain>
    </source>
</reference>